<organism>
    <name type="scientific">Mus musculus</name>
    <name type="common">Mouse</name>
    <dbReference type="NCBI Taxonomy" id="10090"/>
    <lineage>
        <taxon>Eukaryota</taxon>
        <taxon>Metazoa</taxon>
        <taxon>Chordata</taxon>
        <taxon>Craniata</taxon>
        <taxon>Vertebrata</taxon>
        <taxon>Euteleostomi</taxon>
        <taxon>Mammalia</taxon>
        <taxon>Eutheria</taxon>
        <taxon>Euarchontoglires</taxon>
        <taxon>Glires</taxon>
        <taxon>Rodentia</taxon>
        <taxon>Myomorpha</taxon>
        <taxon>Muroidea</taxon>
        <taxon>Muridae</taxon>
        <taxon>Murinae</taxon>
        <taxon>Mus</taxon>
        <taxon>Mus</taxon>
    </lineage>
</organism>
<name>NUCKS_MOUSE</name>
<feature type="chain" id="PRO_0000057979" description="Nuclear ubiquitous casein and cyclin-dependent kinase substrate 1">
    <location>
        <begin position="1"/>
        <end position="234"/>
    </location>
</feature>
<feature type="region of interest" description="Disordered" evidence="2">
    <location>
        <begin position="1"/>
        <end position="234"/>
    </location>
</feature>
<feature type="compositionally biased region" description="Basic residues" evidence="2">
    <location>
        <begin position="35"/>
        <end position="51"/>
    </location>
</feature>
<feature type="compositionally biased region" description="Basic and acidic residues" evidence="2">
    <location>
        <begin position="64"/>
        <end position="77"/>
    </location>
</feature>
<feature type="compositionally biased region" description="Low complexity" evidence="2">
    <location>
        <begin position="91"/>
        <end position="100"/>
    </location>
</feature>
<feature type="compositionally biased region" description="Acidic residues" evidence="2">
    <location>
        <begin position="111"/>
        <end position="124"/>
    </location>
</feature>
<feature type="compositionally biased region" description="Acidic residues" evidence="2">
    <location>
        <begin position="132"/>
        <end position="145"/>
    </location>
</feature>
<feature type="compositionally biased region" description="Basic residues" evidence="2">
    <location>
        <begin position="149"/>
        <end position="174"/>
    </location>
</feature>
<feature type="compositionally biased region" description="Basic residues" evidence="2">
    <location>
        <begin position="185"/>
        <end position="199"/>
    </location>
</feature>
<feature type="compositionally biased region" description="Acidic residues" evidence="2">
    <location>
        <begin position="223"/>
        <end position="234"/>
    </location>
</feature>
<feature type="modified residue" description="Phosphotyrosine" evidence="10">
    <location>
        <position position="13"/>
    </location>
</feature>
<feature type="modified residue" description="Phosphoserine" evidence="10">
    <location>
        <position position="14"/>
    </location>
</feature>
<feature type="modified residue" description="Phosphoserine" evidence="5 6 7 8 9 10">
    <location>
        <position position="19"/>
    </location>
</feature>
<feature type="modified residue" description="Phosphotyrosine" evidence="1">
    <location>
        <position position="26"/>
    </location>
</feature>
<feature type="modified residue" description="Phosphoserine" evidence="10">
    <location>
        <position position="54"/>
    </location>
</feature>
<feature type="modified residue" description="Phosphoserine" evidence="7 8 10">
    <location>
        <position position="58"/>
    </location>
</feature>
<feature type="modified residue" description="Phosphoserine" evidence="7 8 10">
    <location>
        <position position="61"/>
    </location>
</feature>
<feature type="modified residue" description="Phosphoserine" evidence="1">
    <location>
        <position position="73"/>
    </location>
</feature>
<feature type="modified residue" description="Phosphoserine" evidence="1">
    <location>
        <position position="75"/>
    </location>
</feature>
<feature type="modified residue" description="Phosphoserine" evidence="1">
    <location>
        <position position="79"/>
    </location>
</feature>
<feature type="modified residue" description="Phosphoserine" evidence="5 10">
    <location>
        <position position="113"/>
    </location>
</feature>
<feature type="modified residue" description="Phosphoserine" evidence="8">
    <location>
        <position position="130"/>
    </location>
</feature>
<feature type="modified residue" description="Phosphoserine" evidence="8">
    <location>
        <position position="132"/>
    </location>
</feature>
<feature type="modified residue" description="Phosphoserine" evidence="1">
    <location>
        <position position="144"/>
    </location>
</feature>
<feature type="modified residue" description="Phosphothreonine" evidence="7 10">
    <location>
        <position position="179"/>
    </location>
</feature>
<feature type="modified residue" description="Phosphoserine" evidence="7 9 10">
    <location>
        <position position="181"/>
    </location>
</feature>
<feature type="modified residue" description="Phosphothreonine" evidence="1">
    <location>
        <position position="202"/>
    </location>
</feature>
<feature type="modified residue" description="Phosphoserine" evidence="1">
    <location>
        <position position="204"/>
    </location>
</feature>
<feature type="modified residue" description="Phosphoserine" evidence="10">
    <location>
        <position position="214"/>
    </location>
</feature>
<feature type="modified residue" description="Phosphoserine" evidence="1">
    <location>
        <position position="225"/>
    </location>
</feature>
<feature type="modified residue" description="Phosphoserine" evidence="1">
    <location>
        <position position="231"/>
    </location>
</feature>
<feature type="sequence conflict" description="In Ref. 2; BAC37408." evidence="4" ref="2">
    <original>KD</original>
    <variation>N</variation>
    <location>
        <begin position="128"/>
        <end position="129"/>
    </location>
</feature>
<feature type="sequence conflict" description="In Ref. 2; BAC37408." evidence="4" ref="2">
    <original>K</original>
    <variation>Q</variation>
    <location>
        <position position="154"/>
    </location>
</feature>
<feature type="sequence conflict" description="In Ref. 2; BAC37408." evidence="4" ref="2">
    <original>K</original>
    <variation>Q</variation>
    <location>
        <position position="161"/>
    </location>
</feature>
<feature type="sequence conflict" description="In Ref. 2; BAC37408." evidence="4" ref="2">
    <original>K</original>
    <variation>E</variation>
    <location>
        <position position="168"/>
    </location>
</feature>
<feature type="sequence conflict" description="In Ref. 2; BAC37408." evidence="4" ref="2">
    <original>K</original>
    <variation>Q</variation>
    <location>
        <position position="171"/>
    </location>
</feature>
<feature type="sequence conflict" description="In Ref. 2; BAC37408." evidence="4" ref="2">
    <original>L</original>
    <variation>V</variation>
    <location>
        <position position="174"/>
    </location>
</feature>
<feature type="sequence conflict" description="In Ref. 2; BAC37408." evidence="4" ref="2">
    <original>K</original>
    <variation>Q</variation>
    <location>
        <position position="186"/>
    </location>
</feature>
<feature type="sequence conflict" description="In Ref. 2; BAC37408." evidence="4" ref="2">
    <original>K</original>
    <variation>Q</variation>
    <location>
        <position position="206"/>
    </location>
</feature>
<protein>
    <recommendedName>
        <fullName>Nuclear ubiquitous casein and cyclin-dependent kinase substrate 1</fullName>
    </recommendedName>
    <alternativeName>
        <fullName evidence="3">JC7</fullName>
    </alternativeName>
</protein>
<proteinExistence type="evidence at protein level"/>
<comment type="function">
    <text evidence="1">Chromatin-associated protein involved in DNA repair by promoting homologous recombination (HR). Binds double-stranded DNA (dsDNA) and secondary DNA structures, such as D-loop structures, but with less affinity than RAD51AP1.</text>
</comment>
<comment type="subunit">
    <text evidence="1">Does not interact with RAD51.</text>
</comment>
<comment type="subcellular location">
    <subcellularLocation>
        <location evidence="1">Nucleus</location>
    </subcellularLocation>
    <subcellularLocation>
        <location evidence="1">Chromosome</location>
    </subcellularLocation>
</comment>
<comment type="PTM">
    <text evidence="1">Phosphorylated in an ATM-dependent manner in response to DNA damage. Phosphorylated by CDK1 and casein kinase.</text>
</comment>
<reference key="1">
    <citation type="submission" date="2000-10" db="EMBL/GenBank/DDBJ databases">
        <title>A search for cell proliferation related new genes.</title>
        <authorList>
            <person name="Yoshitaka T."/>
        </authorList>
    </citation>
    <scope>NUCLEOTIDE SEQUENCE [MRNA]</scope>
</reference>
<reference key="2">
    <citation type="journal article" date="2005" name="Science">
        <title>The transcriptional landscape of the mammalian genome.</title>
        <authorList>
            <person name="Carninci P."/>
            <person name="Kasukawa T."/>
            <person name="Katayama S."/>
            <person name="Gough J."/>
            <person name="Frith M.C."/>
            <person name="Maeda N."/>
            <person name="Oyama R."/>
            <person name="Ravasi T."/>
            <person name="Lenhard B."/>
            <person name="Wells C."/>
            <person name="Kodzius R."/>
            <person name="Shimokawa K."/>
            <person name="Bajic V.B."/>
            <person name="Brenner S.E."/>
            <person name="Batalov S."/>
            <person name="Forrest A.R."/>
            <person name="Zavolan M."/>
            <person name="Davis M.J."/>
            <person name="Wilming L.G."/>
            <person name="Aidinis V."/>
            <person name="Allen J.E."/>
            <person name="Ambesi-Impiombato A."/>
            <person name="Apweiler R."/>
            <person name="Aturaliya R.N."/>
            <person name="Bailey T.L."/>
            <person name="Bansal M."/>
            <person name="Baxter L."/>
            <person name="Beisel K.W."/>
            <person name="Bersano T."/>
            <person name="Bono H."/>
            <person name="Chalk A.M."/>
            <person name="Chiu K.P."/>
            <person name="Choudhary V."/>
            <person name="Christoffels A."/>
            <person name="Clutterbuck D.R."/>
            <person name="Crowe M.L."/>
            <person name="Dalla E."/>
            <person name="Dalrymple B.P."/>
            <person name="de Bono B."/>
            <person name="Della Gatta G."/>
            <person name="di Bernardo D."/>
            <person name="Down T."/>
            <person name="Engstrom P."/>
            <person name="Fagiolini M."/>
            <person name="Faulkner G."/>
            <person name="Fletcher C.F."/>
            <person name="Fukushima T."/>
            <person name="Furuno M."/>
            <person name="Futaki S."/>
            <person name="Gariboldi M."/>
            <person name="Georgii-Hemming P."/>
            <person name="Gingeras T.R."/>
            <person name="Gojobori T."/>
            <person name="Green R.E."/>
            <person name="Gustincich S."/>
            <person name="Harbers M."/>
            <person name="Hayashi Y."/>
            <person name="Hensch T.K."/>
            <person name="Hirokawa N."/>
            <person name="Hill D."/>
            <person name="Huminiecki L."/>
            <person name="Iacono M."/>
            <person name="Ikeo K."/>
            <person name="Iwama A."/>
            <person name="Ishikawa T."/>
            <person name="Jakt M."/>
            <person name="Kanapin A."/>
            <person name="Katoh M."/>
            <person name="Kawasawa Y."/>
            <person name="Kelso J."/>
            <person name="Kitamura H."/>
            <person name="Kitano H."/>
            <person name="Kollias G."/>
            <person name="Krishnan S.P."/>
            <person name="Kruger A."/>
            <person name="Kummerfeld S.K."/>
            <person name="Kurochkin I.V."/>
            <person name="Lareau L.F."/>
            <person name="Lazarevic D."/>
            <person name="Lipovich L."/>
            <person name="Liu J."/>
            <person name="Liuni S."/>
            <person name="McWilliam S."/>
            <person name="Madan Babu M."/>
            <person name="Madera M."/>
            <person name="Marchionni L."/>
            <person name="Matsuda H."/>
            <person name="Matsuzawa S."/>
            <person name="Miki H."/>
            <person name="Mignone F."/>
            <person name="Miyake S."/>
            <person name="Morris K."/>
            <person name="Mottagui-Tabar S."/>
            <person name="Mulder N."/>
            <person name="Nakano N."/>
            <person name="Nakauchi H."/>
            <person name="Ng P."/>
            <person name="Nilsson R."/>
            <person name="Nishiguchi S."/>
            <person name="Nishikawa S."/>
            <person name="Nori F."/>
            <person name="Ohara O."/>
            <person name="Okazaki Y."/>
            <person name="Orlando V."/>
            <person name="Pang K.C."/>
            <person name="Pavan W.J."/>
            <person name="Pavesi G."/>
            <person name="Pesole G."/>
            <person name="Petrovsky N."/>
            <person name="Piazza S."/>
            <person name="Reed J."/>
            <person name="Reid J.F."/>
            <person name="Ring B.Z."/>
            <person name="Ringwald M."/>
            <person name="Rost B."/>
            <person name="Ruan Y."/>
            <person name="Salzberg S.L."/>
            <person name="Sandelin A."/>
            <person name="Schneider C."/>
            <person name="Schoenbach C."/>
            <person name="Sekiguchi K."/>
            <person name="Semple C.A."/>
            <person name="Seno S."/>
            <person name="Sessa L."/>
            <person name="Sheng Y."/>
            <person name="Shibata Y."/>
            <person name="Shimada H."/>
            <person name="Shimada K."/>
            <person name="Silva D."/>
            <person name="Sinclair B."/>
            <person name="Sperling S."/>
            <person name="Stupka E."/>
            <person name="Sugiura K."/>
            <person name="Sultana R."/>
            <person name="Takenaka Y."/>
            <person name="Taki K."/>
            <person name="Tammoja K."/>
            <person name="Tan S.L."/>
            <person name="Tang S."/>
            <person name="Taylor M.S."/>
            <person name="Tegner J."/>
            <person name="Teichmann S.A."/>
            <person name="Ueda H.R."/>
            <person name="van Nimwegen E."/>
            <person name="Verardo R."/>
            <person name="Wei C.L."/>
            <person name="Yagi K."/>
            <person name="Yamanishi H."/>
            <person name="Zabarovsky E."/>
            <person name="Zhu S."/>
            <person name="Zimmer A."/>
            <person name="Hide W."/>
            <person name="Bult C."/>
            <person name="Grimmond S.M."/>
            <person name="Teasdale R.D."/>
            <person name="Liu E.T."/>
            <person name="Brusic V."/>
            <person name="Quackenbush J."/>
            <person name="Wahlestedt C."/>
            <person name="Mattick J.S."/>
            <person name="Hume D.A."/>
            <person name="Kai C."/>
            <person name="Sasaki D."/>
            <person name="Tomaru Y."/>
            <person name="Fukuda S."/>
            <person name="Kanamori-Katayama M."/>
            <person name="Suzuki M."/>
            <person name="Aoki J."/>
            <person name="Arakawa T."/>
            <person name="Iida J."/>
            <person name="Imamura K."/>
            <person name="Itoh M."/>
            <person name="Kato T."/>
            <person name="Kawaji H."/>
            <person name="Kawagashira N."/>
            <person name="Kawashima T."/>
            <person name="Kojima M."/>
            <person name="Kondo S."/>
            <person name="Konno H."/>
            <person name="Nakano K."/>
            <person name="Ninomiya N."/>
            <person name="Nishio T."/>
            <person name="Okada M."/>
            <person name="Plessy C."/>
            <person name="Shibata K."/>
            <person name="Shiraki T."/>
            <person name="Suzuki S."/>
            <person name="Tagami M."/>
            <person name="Waki K."/>
            <person name="Watahiki A."/>
            <person name="Okamura-Oho Y."/>
            <person name="Suzuki H."/>
            <person name="Kawai J."/>
            <person name="Hayashizaki Y."/>
        </authorList>
    </citation>
    <scope>NUCLEOTIDE SEQUENCE [LARGE SCALE MRNA]</scope>
    <source>
        <strain>C57BL/6J</strain>
        <tissue>Lung</tissue>
    </source>
</reference>
<reference key="3">
    <citation type="journal article" date="2004" name="Genome Res.">
        <title>The status, quality, and expansion of the NIH full-length cDNA project: the Mammalian Gene Collection (MGC).</title>
        <authorList>
            <consortium name="The MGC Project Team"/>
        </authorList>
    </citation>
    <scope>NUCLEOTIDE SEQUENCE [LARGE SCALE MRNA]</scope>
    <source>
        <strain>FVB/N</strain>
        <tissue>Salivary gland</tissue>
    </source>
</reference>
<reference key="4">
    <citation type="journal article" date="2004" name="Mol. Cell. Proteomics">
        <title>Phosphoproteomic analysis of the developing mouse brain.</title>
        <authorList>
            <person name="Ballif B.A."/>
            <person name="Villen J."/>
            <person name="Beausoleil S.A."/>
            <person name="Schwartz D."/>
            <person name="Gygi S.P."/>
        </authorList>
    </citation>
    <scope>PHOSPHORYLATION [LARGE SCALE ANALYSIS] AT SER-19 AND SER-113</scope>
    <scope>IDENTIFICATION BY MASS SPECTROMETRY [LARGE SCALE ANALYSIS]</scope>
    <source>
        <tissue>Embryonic brain</tissue>
    </source>
</reference>
<reference key="5">
    <citation type="journal article" date="2006" name="Mol. Cell. Proteomics">
        <title>Comprehensive identification of phosphorylation sites in postsynaptic density preparations.</title>
        <authorList>
            <person name="Trinidad J.C."/>
            <person name="Specht C.G."/>
            <person name="Thalhammer A."/>
            <person name="Schoepfer R."/>
            <person name="Burlingame A.L."/>
        </authorList>
    </citation>
    <scope>PHOSPHORYLATION [LARGE SCALE ANALYSIS] AT SER-19</scope>
    <scope>IDENTIFICATION BY MASS SPECTROMETRY [LARGE SCALE ANALYSIS]</scope>
    <source>
        <tissue>Brain</tissue>
    </source>
</reference>
<reference key="6">
    <citation type="journal article" date="2007" name="Proc. Natl. Acad. Sci. U.S.A.">
        <title>Large-scale phosphorylation analysis of mouse liver.</title>
        <authorList>
            <person name="Villen J."/>
            <person name="Beausoleil S.A."/>
            <person name="Gerber S.A."/>
            <person name="Gygi S.P."/>
        </authorList>
    </citation>
    <scope>PHOSPHORYLATION [LARGE SCALE ANALYSIS] AT SER-19; SER-58; SER-61; THR-179 AND SER-181</scope>
    <scope>IDENTIFICATION BY MASS SPECTROMETRY [LARGE SCALE ANALYSIS]</scope>
    <source>
        <tissue>Liver</tissue>
    </source>
</reference>
<reference key="7">
    <citation type="journal article" date="2008" name="J. Proteome Res.">
        <title>Specific phosphopeptide enrichment with immobilized titanium ion affinity chromatography adsorbent for phosphoproteome analysis.</title>
        <authorList>
            <person name="Zhou H."/>
            <person name="Ye M."/>
            <person name="Dong J."/>
            <person name="Han G."/>
            <person name="Jiang X."/>
            <person name="Wu R."/>
            <person name="Zou H."/>
        </authorList>
    </citation>
    <scope>PHOSPHORYLATION [LARGE SCALE ANALYSIS] AT SER-19; SER-58; SER-61; SER-130 AND SER-132</scope>
    <scope>IDENTIFICATION BY MASS SPECTROMETRY [LARGE SCALE ANALYSIS]</scope>
    <source>
        <tissue>Liver</tissue>
    </source>
</reference>
<reference key="8">
    <citation type="journal article" date="2009" name="Mol. Cell. Proteomics">
        <title>Large scale localization of protein phosphorylation by use of electron capture dissociation mass spectrometry.</title>
        <authorList>
            <person name="Sweet S.M."/>
            <person name="Bailey C.M."/>
            <person name="Cunningham D.L."/>
            <person name="Heath J.K."/>
            <person name="Cooper H.J."/>
        </authorList>
    </citation>
    <scope>PHOSPHORYLATION [LARGE SCALE ANALYSIS] AT SER-19 AND SER-181</scope>
    <scope>IDENTIFICATION BY MASS SPECTROMETRY [LARGE SCALE ANALYSIS]</scope>
    <source>
        <tissue>Embryonic fibroblast</tissue>
    </source>
</reference>
<reference key="9">
    <citation type="journal article" date="2010" name="Cell">
        <title>A tissue-specific atlas of mouse protein phosphorylation and expression.</title>
        <authorList>
            <person name="Huttlin E.L."/>
            <person name="Jedrychowski M.P."/>
            <person name="Elias J.E."/>
            <person name="Goswami T."/>
            <person name="Rad R."/>
            <person name="Beausoleil S.A."/>
            <person name="Villen J."/>
            <person name="Haas W."/>
            <person name="Sowa M.E."/>
            <person name="Gygi S.P."/>
        </authorList>
    </citation>
    <scope>PHOSPHORYLATION [LARGE SCALE ANALYSIS] AT TYR-13; SER-14; SER-19; SER-54; SER-58; SER-61; SER-113; THR-179; SER-181 AND SER-214</scope>
    <scope>IDENTIFICATION BY MASS SPECTROMETRY [LARGE SCALE ANALYSIS]</scope>
    <source>
        <tissue>Brain</tissue>
        <tissue>Brown adipose tissue</tissue>
        <tissue>Heart</tissue>
        <tissue>Kidney</tissue>
        <tissue>Liver</tissue>
        <tissue>Lung</tissue>
        <tissue>Pancreas</tissue>
        <tissue>Spleen</tissue>
        <tissue>Testis</tissue>
    </source>
</reference>
<gene>
    <name type="primary">Nucks1</name>
    <name type="synonym">Nucks</name>
</gene>
<keyword id="KW-0158">Chromosome</keyword>
<keyword id="KW-0227">DNA damage</keyword>
<keyword id="KW-0234">DNA repair</keyword>
<keyword id="KW-0539">Nucleus</keyword>
<keyword id="KW-0597">Phosphoprotein</keyword>
<keyword id="KW-1185">Reference proteome</keyword>
<evidence type="ECO:0000250" key="1">
    <source>
        <dbReference type="UniProtKB" id="Q9H1E3"/>
    </source>
</evidence>
<evidence type="ECO:0000256" key="2">
    <source>
        <dbReference type="SAM" id="MobiDB-lite"/>
    </source>
</evidence>
<evidence type="ECO:0000303" key="3">
    <source ref="1"/>
</evidence>
<evidence type="ECO:0000305" key="4"/>
<evidence type="ECO:0007744" key="5">
    <source>
    </source>
</evidence>
<evidence type="ECO:0007744" key="6">
    <source>
    </source>
</evidence>
<evidence type="ECO:0007744" key="7">
    <source>
    </source>
</evidence>
<evidence type="ECO:0007744" key="8">
    <source>
    </source>
</evidence>
<evidence type="ECO:0007744" key="9">
    <source>
    </source>
</evidence>
<evidence type="ECO:0007744" key="10">
    <source>
    </source>
</evidence>
<dbReference type="EMBL" id="AB049825">
    <property type="protein sequence ID" value="BAC06821.1"/>
    <property type="molecule type" value="mRNA"/>
</dbReference>
<dbReference type="EMBL" id="AK078816">
    <property type="protein sequence ID" value="BAC37408.1"/>
    <property type="molecule type" value="mRNA"/>
</dbReference>
<dbReference type="EMBL" id="BC039951">
    <property type="protein sequence ID" value="AAH39951.1"/>
    <property type="molecule type" value="mRNA"/>
</dbReference>
<dbReference type="CCDS" id="CCDS48356.1"/>
<dbReference type="RefSeq" id="NP_001139276.1">
    <property type="nucleotide sequence ID" value="NM_001145804.1"/>
</dbReference>
<dbReference type="RefSeq" id="NP_780503.2">
    <property type="nucleotide sequence ID" value="NM_175294.3"/>
</dbReference>
<dbReference type="BioGRID" id="221055">
    <property type="interactions" value="4"/>
</dbReference>
<dbReference type="FunCoup" id="Q80XU3">
    <property type="interactions" value="4019"/>
</dbReference>
<dbReference type="IntAct" id="Q80XU3">
    <property type="interactions" value="3"/>
</dbReference>
<dbReference type="MINT" id="Q80XU3"/>
<dbReference type="STRING" id="10090.ENSMUSP00000062576"/>
<dbReference type="iPTMnet" id="Q80XU3"/>
<dbReference type="PhosphoSitePlus" id="Q80XU3"/>
<dbReference type="jPOST" id="Q80XU3"/>
<dbReference type="PaxDb" id="10090-ENSMUSP00000062576"/>
<dbReference type="PeptideAtlas" id="Q80XU3"/>
<dbReference type="ProteomicsDB" id="293778"/>
<dbReference type="Pumba" id="Q80XU3"/>
<dbReference type="TopDownProteomics" id="Q80XU3"/>
<dbReference type="Antibodypedia" id="34570">
    <property type="antibodies" value="189 antibodies from 31 providers"/>
</dbReference>
<dbReference type="DNASU" id="98415"/>
<dbReference type="Ensembl" id="ENSMUST00000062264.8">
    <property type="protein sequence ID" value="ENSMUSP00000062576.7"/>
    <property type="gene ID" value="ENSMUSG00000026434.13"/>
</dbReference>
<dbReference type="GeneID" id="98415"/>
<dbReference type="KEGG" id="mmu:98415"/>
<dbReference type="UCSC" id="uc007cny.2">
    <property type="organism name" value="mouse"/>
</dbReference>
<dbReference type="AGR" id="MGI:1934811"/>
<dbReference type="CTD" id="64710"/>
<dbReference type="MGI" id="MGI:1934811">
    <property type="gene designation" value="Nucks1"/>
</dbReference>
<dbReference type="VEuPathDB" id="HostDB:ENSMUSG00000026434"/>
<dbReference type="eggNOG" id="ENOG502R8NJ">
    <property type="taxonomic scope" value="Eukaryota"/>
</dbReference>
<dbReference type="GeneTree" id="ENSGT00940000153414"/>
<dbReference type="HOGENOM" id="CLU_067355_0_1_1"/>
<dbReference type="InParanoid" id="Q80XU3"/>
<dbReference type="OMA" id="MILIRVS"/>
<dbReference type="OrthoDB" id="9950344at2759"/>
<dbReference type="PhylomeDB" id="Q80XU3"/>
<dbReference type="BioGRID-ORCS" id="98415">
    <property type="hits" value="3 hits in 114 CRISPR screens"/>
</dbReference>
<dbReference type="ChiTaRS" id="Nucks1">
    <property type="organism name" value="mouse"/>
</dbReference>
<dbReference type="PRO" id="PR:Q80XU3"/>
<dbReference type="Proteomes" id="UP000000589">
    <property type="component" value="Chromosome 1"/>
</dbReference>
<dbReference type="RNAct" id="Q80XU3">
    <property type="molecule type" value="protein"/>
</dbReference>
<dbReference type="Bgee" id="ENSMUSG00000026434">
    <property type="expression patterns" value="Expressed in rostral migratory stream and 259 other cell types or tissues"/>
</dbReference>
<dbReference type="ExpressionAtlas" id="Q80XU3">
    <property type="expression patterns" value="baseline and differential"/>
</dbReference>
<dbReference type="GO" id="GO:0000785">
    <property type="term" value="C:chromatin"/>
    <property type="evidence" value="ECO:0000314"/>
    <property type="project" value="ParkinsonsUK-UCL"/>
</dbReference>
<dbReference type="GO" id="GO:0005737">
    <property type="term" value="C:cytoplasm"/>
    <property type="evidence" value="ECO:0000314"/>
    <property type="project" value="ParkinsonsUK-UCL"/>
</dbReference>
<dbReference type="GO" id="GO:0005730">
    <property type="term" value="C:nucleolus"/>
    <property type="evidence" value="ECO:0007669"/>
    <property type="project" value="Ensembl"/>
</dbReference>
<dbReference type="GO" id="GO:0005654">
    <property type="term" value="C:nucleoplasm"/>
    <property type="evidence" value="ECO:0007669"/>
    <property type="project" value="Ensembl"/>
</dbReference>
<dbReference type="GO" id="GO:0005634">
    <property type="term" value="C:nucleus"/>
    <property type="evidence" value="ECO:0000314"/>
    <property type="project" value="ParkinsonsUK-UCL"/>
</dbReference>
<dbReference type="GO" id="GO:0003682">
    <property type="term" value="F:chromatin binding"/>
    <property type="evidence" value="ECO:0007669"/>
    <property type="project" value="Ensembl"/>
</dbReference>
<dbReference type="GO" id="GO:0140297">
    <property type="term" value="F:DNA-binding transcription factor binding"/>
    <property type="evidence" value="ECO:0007669"/>
    <property type="project" value="Ensembl"/>
</dbReference>
<dbReference type="GO" id="GO:0003690">
    <property type="term" value="F:double-stranded DNA binding"/>
    <property type="evidence" value="ECO:0007669"/>
    <property type="project" value="Ensembl"/>
</dbReference>
<dbReference type="GO" id="GO:0003713">
    <property type="term" value="F:transcription coactivator activity"/>
    <property type="evidence" value="ECO:0007669"/>
    <property type="project" value="Ensembl"/>
</dbReference>
<dbReference type="GO" id="GO:0071481">
    <property type="term" value="P:cellular response to X-ray"/>
    <property type="evidence" value="ECO:0007669"/>
    <property type="project" value="Ensembl"/>
</dbReference>
<dbReference type="GO" id="GO:0006325">
    <property type="term" value="P:chromatin organization"/>
    <property type="evidence" value="ECO:0000315"/>
    <property type="project" value="ParkinsonsUK-UCL"/>
</dbReference>
<dbReference type="GO" id="GO:0000724">
    <property type="term" value="P:double-strand break repair via homologous recombination"/>
    <property type="evidence" value="ECO:0007669"/>
    <property type="project" value="Ensembl"/>
</dbReference>
<dbReference type="GO" id="GO:0042593">
    <property type="term" value="P:glucose homeostasis"/>
    <property type="evidence" value="ECO:0000315"/>
    <property type="project" value="MGI"/>
</dbReference>
<dbReference type="GO" id="GO:0036297">
    <property type="term" value="P:interstrand cross-link repair"/>
    <property type="evidence" value="ECO:0007669"/>
    <property type="project" value="Ensembl"/>
</dbReference>
<dbReference type="GO" id="GO:0001678">
    <property type="term" value="P:intracellular glucose homeostasis"/>
    <property type="evidence" value="ECO:0000315"/>
    <property type="project" value="ParkinsonsUK-UCL"/>
</dbReference>
<dbReference type="GO" id="GO:0044829">
    <property type="term" value="P:positive regulation by host of viral genome replication"/>
    <property type="evidence" value="ECO:0007669"/>
    <property type="project" value="Ensembl"/>
</dbReference>
<dbReference type="GO" id="GO:0043923">
    <property type="term" value="P:positive regulation by host of viral transcription"/>
    <property type="evidence" value="ECO:0007669"/>
    <property type="project" value="Ensembl"/>
</dbReference>
<dbReference type="GO" id="GO:0046628">
    <property type="term" value="P:positive regulation of insulin receptor signaling pathway"/>
    <property type="evidence" value="ECO:0000315"/>
    <property type="project" value="MGI"/>
</dbReference>
<dbReference type="GO" id="GO:0045944">
    <property type="term" value="P:positive regulation of transcription by RNA polymerase II"/>
    <property type="evidence" value="ECO:0000314"/>
    <property type="project" value="ParkinsonsUK-UCL"/>
</dbReference>
<dbReference type="GO" id="GO:0006275">
    <property type="term" value="P:regulation of DNA replication"/>
    <property type="evidence" value="ECO:0007669"/>
    <property type="project" value="Ensembl"/>
</dbReference>
<dbReference type="GO" id="GO:0060382">
    <property type="term" value="P:regulation of DNA strand elongation"/>
    <property type="evidence" value="ECO:0007669"/>
    <property type="project" value="Ensembl"/>
</dbReference>
<dbReference type="GO" id="GO:0046626">
    <property type="term" value="P:regulation of insulin receptor signaling pathway"/>
    <property type="evidence" value="ECO:0000315"/>
    <property type="project" value="ParkinsonsUK-UCL"/>
</dbReference>
<dbReference type="GO" id="GO:0006357">
    <property type="term" value="P:regulation of transcription by RNA polymerase II"/>
    <property type="evidence" value="ECO:0000305"/>
    <property type="project" value="ParkinsonsUK-UCL"/>
</dbReference>
<dbReference type="GO" id="GO:0031297">
    <property type="term" value="P:replication fork processing"/>
    <property type="evidence" value="ECO:0007669"/>
    <property type="project" value="Ensembl"/>
</dbReference>
<dbReference type="InterPro" id="IPR052003">
    <property type="entry name" value="HR_DNA-Binding_Protein"/>
</dbReference>
<dbReference type="PANTHER" id="PTHR15361:SF1">
    <property type="entry name" value="NUCLEAR UBIQUITOUS CASEIN AND CYCLIN-DEPENDENT KINASE SUBSTRATE 1"/>
    <property type="match status" value="1"/>
</dbReference>
<dbReference type="PANTHER" id="PTHR15361">
    <property type="entry name" value="RAD51/NUKS-INTERACTING PROTEIN"/>
    <property type="match status" value="1"/>
</dbReference>
<accession>Q80XU3</accession>
<accession>Q8BVD8</accession>
<sequence>MSRPVRNRKVVDYSQFQESDDADEDYGRDSGPPAKKIRSSPREAKNKRRSGKNSQEDSEDSEEKDVKTKKDDSHSAEDSEDEKDDHKNVRQQRQAASKAASKQREMLLEDVGSEEEPEEDDEAPFQEKDSGSDEDFLMEDDDDSDYGSSKKKNKKMVKKSKPERKEKKMPKPRLKATVTPSPVKGKAKVGRPTASKKSKEKTPSPKEEDEEAESPPEKKSGDEGSEDEASSGED</sequence>